<feature type="chain" id="PRO_0000129149" description="Leafy/floricaula homolog FL1">
    <location>
        <begin position="1"/>
        <end position="359"/>
    </location>
</feature>
<feature type="DNA-binding region" evidence="1">
    <location>
        <begin position="179"/>
        <end position="183"/>
    </location>
</feature>
<feature type="DNA-binding region" evidence="1">
    <location>
        <begin position="248"/>
        <end position="255"/>
    </location>
</feature>
<feature type="DNA-binding region" evidence="1">
    <location>
        <begin position="320"/>
        <end position="323"/>
    </location>
</feature>
<feature type="region of interest" description="Disordered" evidence="2">
    <location>
        <begin position="113"/>
        <end position="170"/>
    </location>
</feature>
<feature type="region of interest" description="Disordered" evidence="2">
    <location>
        <begin position="340"/>
        <end position="359"/>
    </location>
</feature>
<feature type="compositionally biased region" description="Basic residues" evidence="2">
    <location>
        <begin position="144"/>
        <end position="155"/>
    </location>
</feature>
<feature type="compositionally biased region" description="Low complexity" evidence="2">
    <location>
        <begin position="340"/>
        <end position="352"/>
    </location>
</feature>
<feature type="site" description="Interaction with DNA" evidence="1">
    <location>
        <position position="226"/>
    </location>
</feature>
<feature type="site" description="Interaction with DNA" evidence="1">
    <location>
        <position position="233"/>
    </location>
</feature>
<feature type="site" description="Interaction with DNA" evidence="1">
    <location>
        <position position="237"/>
    </location>
</feature>
<feature type="site" description="Interaction with DNA" evidence="1">
    <location>
        <position position="284"/>
    </location>
</feature>
<name>FL1_EUCGL</name>
<protein>
    <recommendedName>
        <fullName>Leafy/floricaula homolog FL1</fullName>
        <shortName>ELF1</shortName>
    </recommendedName>
</protein>
<keyword id="KW-0010">Activator</keyword>
<keyword id="KW-0217">Developmental protein</keyword>
<keyword id="KW-0238">DNA-binding</keyword>
<keyword id="KW-0539">Nucleus</keyword>
<keyword id="KW-0804">Transcription</keyword>
<keyword id="KW-0805">Transcription regulation</keyword>
<dbReference type="EMBL" id="AF034806">
    <property type="protein sequence ID" value="AAC31359.1"/>
    <property type="molecule type" value="Genomic_DNA"/>
</dbReference>
<dbReference type="SMR" id="O64953"/>
<dbReference type="GO" id="GO:0005634">
    <property type="term" value="C:nucleus"/>
    <property type="evidence" value="ECO:0007669"/>
    <property type="project" value="UniProtKB-SubCell"/>
</dbReference>
<dbReference type="GO" id="GO:0003677">
    <property type="term" value="F:DNA binding"/>
    <property type="evidence" value="ECO:0007669"/>
    <property type="project" value="UniProtKB-KW"/>
</dbReference>
<dbReference type="GO" id="GO:0006355">
    <property type="term" value="P:regulation of DNA-templated transcription"/>
    <property type="evidence" value="ECO:0007669"/>
    <property type="project" value="InterPro"/>
</dbReference>
<dbReference type="Gene3D" id="1.10.4180.10">
    <property type="entry name" value="Protein LEAFY"/>
    <property type="match status" value="1"/>
</dbReference>
<dbReference type="InterPro" id="IPR035209">
    <property type="entry name" value="FLO/LFY_C"/>
</dbReference>
<dbReference type="InterPro" id="IPR002910">
    <property type="entry name" value="FLO_LFY"/>
</dbReference>
<dbReference type="InterPro" id="IPR038276">
    <property type="entry name" value="Floricaula/leafy_C_sf"/>
</dbReference>
<dbReference type="InterPro" id="IPR035079">
    <property type="entry name" value="LFY_SAM"/>
</dbReference>
<dbReference type="PANTHER" id="PTHR36079">
    <property type="entry name" value="PROTEIN LEAFY"/>
    <property type="match status" value="1"/>
</dbReference>
<dbReference type="PANTHER" id="PTHR36079:SF1">
    <property type="entry name" value="PROTEIN LEAFY"/>
    <property type="match status" value="1"/>
</dbReference>
<dbReference type="Pfam" id="PF17538">
    <property type="entry name" value="C_LFY_FLO"/>
    <property type="match status" value="1"/>
</dbReference>
<dbReference type="Pfam" id="PF01698">
    <property type="entry name" value="SAM_LFY"/>
    <property type="match status" value="1"/>
</dbReference>
<comment type="function">
    <text evidence="1">Probable transcription factor.</text>
</comment>
<comment type="subcellular location">
    <subcellularLocation>
        <location evidence="3">Nucleus</location>
    </subcellularLocation>
</comment>
<comment type="tissue specificity">
    <text>Expressed strongly in the early floral primordium and then successively in the primordia of sepals, petals, stamens and carpels. Also in the leaf primordia and young leaves.</text>
</comment>
<comment type="similarity">
    <text evidence="3">Belongs to the FLO/LFY family.</text>
</comment>
<proteinExistence type="evidence at transcript level"/>
<gene>
    <name type="primary">LF1</name>
</gene>
<organism>
    <name type="scientific">Eucalyptus globulus</name>
    <name type="common">Tasmanian blue gum</name>
    <dbReference type="NCBI Taxonomy" id="34317"/>
    <lineage>
        <taxon>Eukaryota</taxon>
        <taxon>Viridiplantae</taxon>
        <taxon>Streptophyta</taxon>
        <taxon>Embryophyta</taxon>
        <taxon>Tracheophyta</taxon>
        <taxon>Spermatophyta</taxon>
        <taxon>Magnoliopsida</taxon>
        <taxon>eudicotyledons</taxon>
        <taxon>Gunneridae</taxon>
        <taxon>Pentapetalae</taxon>
        <taxon>rosids</taxon>
        <taxon>malvids</taxon>
        <taxon>Myrtales</taxon>
        <taxon>Myrtaceae</taxon>
        <taxon>Myrtoideae</taxon>
        <taxon>Eucalypteae</taxon>
        <taxon>Eucalyptus</taxon>
    </lineage>
</organism>
<sequence>MDPEAFAVVGLRTMGGLEELFEAYGIRYLTASRIAEMGFTANTLLDMKEEELDDMMNSLSHIFRWDLLVGERYGIKAAIRAERRRLLEADDRRHHLHSTDHALLDALSHQGLSEEQVVQHSEKDQLGRAGSGDTAGTSWGAQQQRKKHRHRHHITAMKGAATEEDEEDEEEVEEMRRQREHPFIVTEPGEVARGKKNGLDYLFHLYDQCRDFLLQVQSLAKERGEKCPTKVTNQVFRYAKKAGASYINKPKMRHYVHCYALHCLDEHASNALRKSFKERGENVGAWRQACYHPLVTIAGRRAGWDIDAIFNAHPRLCIWYVPTKLRQLCHAHRHSSASAASSASTSTSAPTAHHLELPY</sequence>
<reference key="1">
    <citation type="journal article" date="1998" name="Plant Mol. Biol.">
        <title>Eucalyptus has a functional equivalent of the Arabidopsis floral meristem identity gene LEAFY.</title>
        <authorList>
            <person name="Southerton S.G."/>
            <person name="Strauss S.H."/>
            <person name="Olive M.R."/>
            <person name="Harcourt R.L."/>
            <person name="Decroocq V."/>
            <person name="Zhu X."/>
            <person name="Llewellyn D.J."/>
            <person name="Peacock W.J."/>
            <person name="Dennis E.S."/>
        </authorList>
    </citation>
    <scope>NUCLEOTIDE SEQUENCE [GENOMIC DNA]</scope>
</reference>
<accession>O64953</accession>
<evidence type="ECO:0000250" key="1"/>
<evidence type="ECO:0000256" key="2">
    <source>
        <dbReference type="SAM" id="MobiDB-lite"/>
    </source>
</evidence>
<evidence type="ECO:0000305" key="3"/>